<sequence>MVIRHDWSREEVRSLLDLPFPELLFRAAAIHRACFDPREVQISTLLSIKTGGCPEDCAYCPQAAQYDTGVEASRLMRVDAVLEEARAAKAAGASRFCMGAAWRSPKERDMDTVCEMIEGVKALGMESCVTLGMLTDQQALRLKQAGLDYYNHNLDTSPEYYGAVISTRTYEDRLETLAHVRDAGINVCCGGILGLGEGLDDRAGLIVALANLPRHPESVPINALVQVEGTPLKGQEPVDTIDFVRMIAVARITMPHARVRLSAGREAMTDEAQALCFLAGANSIFYGEKLLTTGNPAAERDRALLSRLGMRLV</sequence>
<organism>
    <name type="scientific">Granulibacter bethesdensis (strain ATCC BAA-1260 / CGDNIH1)</name>
    <dbReference type="NCBI Taxonomy" id="391165"/>
    <lineage>
        <taxon>Bacteria</taxon>
        <taxon>Pseudomonadati</taxon>
        <taxon>Pseudomonadota</taxon>
        <taxon>Alphaproteobacteria</taxon>
        <taxon>Acetobacterales</taxon>
        <taxon>Acetobacteraceae</taxon>
        <taxon>Granulibacter</taxon>
    </lineage>
</organism>
<proteinExistence type="inferred from homology"/>
<feature type="chain" id="PRO_0000381411" description="Biotin synthase">
    <location>
        <begin position="1"/>
        <end position="313"/>
    </location>
</feature>
<feature type="domain" description="Radical SAM core" evidence="2">
    <location>
        <begin position="38"/>
        <end position="262"/>
    </location>
</feature>
<feature type="binding site" evidence="1">
    <location>
        <position position="53"/>
    </location>
    <ligand>
        <name>[4Fe-4S] cluster</name>
        <dbReference type="ChEBI" id="CHEBI:49883"/>
        <note>4Fe-4S-S-AdoMet</note>
    </ligand>
</feature>
<feature type="binding site" evidence="1">
    <location>
        <position position="57"/>
    </location>
    <ligand>
        <name>[4Fe-4S] cluster</name>
        <dbReference type="ChEBI" id="CHEBI:49883"/>
        <note>4Fe-4S-S-AdoMet</note>
    </ligand>
</feature>
<feature type="binding site" evidence="1">
    <location>
        <position position="60"/>
    </location>
    <ligand>
        <name>[4Fe-4S] cluster</name>
        <dbReference type="ChEBI" id="CHEBI:49883"/>
        <note>4Fe-4S-S-AdoMet</note>
    </ligand>
</feature>
<feature type="binding site" evidence="1">
    <location>
        <position position="97"/>
    </location>
    <ligand>
        <name>[2Fe-2S] cluster</name>
        <dbReference type="ChEBI" id="CHEBI:190135"/>
    </ligand>
</feature>
<feature type="binding site" evidence="1">
    <location>
        <position position="128"/>
    </location>
    <ligand>
        <name>[2Fe-2S] cluster</name>
        <dbReference type="ChEBI" id="CHEBI:190135"/>
    </ligand>
</feature>
<feature type="binding site" evidence="1">
    <location>
        <position position="188"/>
    </location>
    <ligand>
        <name>[2Fe-2S] cluster</name>
        <dbReference type="ChEBI" id="CHEBI:190135"/>
    </ligand>
</feature>
<feature type="binding site" evidence="1">
    <location>
        <position position="260"/>
    </location>
    <ligand>
        <name>[2Fe-2S] cluster</name>
        <dbReference type="ChEBI" id="CHEBI:190135"/>
    </ligand>
</feature>
<keyword id="KW-0001">2Fe-2S</keyword>
<keyword id="KW-0004">4Fe-4S</keyword>
<keyword id="KW-0093">Biotin biosynthesis</keyword>
<keyword id="KW-0408">Iron</keyword>
<keyword id="KW-0411">Iron-sulfur</keyword>
<keyword id="KW-0479">Metal-binding</keyword>
<keyword id="KW-1185">Reference proteome</keyword>
<keyword id="KW-0949">S-adenosyl-L-methionine</keyword>
<keyword id="KW-0808">Transferase</keyword>
<dbReference type="EC" id="2.8.1.6" evidence="1"/>
<dbReference type="EMBL" id="CP000394">
    <property type="protein sequence ID" value="ABI61397.1"/>
    <property type="status" value="ALT_INIT"/>
    <property type="molecule type" value="Genomic_DNA"/>
</dbReference>
<dbReference type="SMR" id="Q0BUV5"/>
<dbReference type="STRING" id="391165.GbCGDNIH1_0499"/>
<dbReference type="KEGG" id="gbe:GbCGDNIH1_0499"/>
<dbReference type="eggNOG" id="COG0502">
    <property type="taxonomic scope" value="Bacteria"/>
</dbReference>
<dbReference type="HOGENOM" id="CLU_033172_1_2_5"/>
<dbReference type="UniPathway" id="UPA00078">
    <property type="reaction ID" value="UER00162"/>
</dbReference>
<dbReference type="Proteomes" id="UP000001963">
    <property type="component" value="Chromosome"/>
</dbReference>
<dbReference type="GO" id="GO:0051537">
    <property type="term" value="F:2 iron, 2 sulfur cluster binding"/>
    <property type="evidence" value="ECO:0007669"/>
    <property type="project" value="UniProtKB-KW"/>
</dbReference>
<dbReference type="GO" id="GO:0051539">
    <property type="term" value="F:4 iron, 4 sulfur cluster binding"/>
    <property type="evidence" value="ECO:0007669"/>
    <property type="project" value="UniProtKB-KW"/>
</dbReference>
<dbReference type="GO" id="GO:0004076">
    <property type="term" value="F:biotin synthase activity"/>
    <property type="evidence" value="ECO:0007669"/>
    <property type="project" value="UniProtKB-UniRule"/>
</dbReference>
<dbReference type="GO" id="GO:0005506">
    <property type="term" value="F:iron ion binding"/>
    <property type="evidence" value="ECO:0007669"/>
    <property type="project" value="UniProtKB-UniRule"/>
</dbReference>
<dbReference type="GO" id="GO:0009102">
    <property type="term" value="P:biotin biosynthetic process"/>
    <property type="evidence" value="ECO:0007669"/>
    <property type="project" value="UniProtKB-UniRule"/>
</dbReference>
<dbReference type="CDD" id="cd01335">
    <property type="entry name" value="Radical_SAM"/>
    <property type="match status" value="1"/>
</dbReference>
<dbReference type="FunFam" id="3.20.20.70:FF:000011">
    <property type="entry name" value="Biotin synthase"/>
    <property type="match status" value="1"/>
</dbReference>
<dbReference type="Gene3D" id="3.20.20.70">
    <property type="entry name" value="Aldolase class I"/>
    <property type="match status" value="1"/>
</dbReference>
<dbReference type="HAMAP" id="MF_01694">
    <property type="entry name" value="BioB"/>
    <property type="match status" value="1"/>
</dbReference>
<dbReference type="InterPro" id="IPR013785">
    <property type="entry name" value="Aldolase_TIM"/>
</dbReference>
<dbReference type="InterPro" id="IPR010722">
    <property type="entry name" value="BATS_dom"/>
</dbReference>
<dbReference type="InterPro" id="IPR002684">
    <property type="entry name" value="Biotin_synth/BioAB"/>
</dbReference>
<dbReference type="InterPro" id="IPR024177">
    <property type="entry name" value="Biotin_synthase"/>
</dbReference>
<dbReference type="InterPro" id="IPR006638">
    <property type="entry name" value="Elp3/MiaA/NifB-like_rSAM"/>
</dbReference>
<dbReference type="InterPro" id="IPR007197">
    <property type="entry name" value="rSAM"/>
</dbReference>
<dbReference type="NCBIfam" id="TIGR00433">
    <property type="entry name" value="bioB"/>
    <property type="match status" value="1"/>
</dbReference>
<dbReference type="PANTHER" id="PTHR22976">
    <property type="entry name" value="BIOTIN SYNTHASE"/>
    <property type="match status" value="1"/>
</dbReference>
<dbReference type="PANTHER" id="PTHR22976:SF2">
    <property type="entry name" value="BIOTIN SYNTHASE, MITOCHONDRIAL"/>
    <property type="match status" value="1"/>
</dbReference>
<dbReference type="Pfam" id="PF06968">
    <property type="entry name" value="BATS"/>
    <property type="match status" value="1"/>
</dbReference>
<dbReference type="Pfam" id="PF04055">
    <property type="entry name" value="Radical_SAM"/>
    <property type="match status" value="1"/>
</dbReference>
<dbReference type="PIRSF" id="PIRSF001619">
    <property type="entry name" value="Biotin_synth"/>
    <property type="match status" value="1"/>
</dbReference>
<dbReference type="SFLD" id="SFLDG01060">
    <property type="entry name" value="BATS_domain_containing"/>
    <property type="match status" value="1"/>
</dbReference>
<dbReference type="SFLD" id="SFLDF00272">
    <property type="entry name" value="biotin_synthase"/>
    <property type="match status" value="1"/>
</dbReference>
<dbReference type="SMART" id="SM00876">
    <property type="entry name" value="BATS"/>
    <property type="match status" value="1"/>
</dbReference>
<dbReference type="SMART" id="SM00729">
    <property type="entry name" value="Elp3"/>
    <property type="match status" value="1"/>
</dbReference>
<dbReference type="SUPFAM" id="SSF102114">
    <property type="entry name" value="Radical SAM enzymes"/>
    <property type="match status" value="1"/>
</dbReference>
<dbReference type="PROSITE" id="PS51918">
    <property type="entry name" value="RADICAL_SAM"/>
    <property type="match status" value="1"/>
</dbReference>
<comment type="function">
    <text evidence="1">Catalyzes the conversion of dethiobiotin (DTB) to biotin by the insertion of a sulfur atom into dethiobiotin via a radical-based mechanism.</text>
</comment>
<comment type="catalytic activity">
    <reaction evidence="1">
        <text>(4R,5S)-dethiobiotin + (sulfur carrier)-SH + 2 reduced [2Fe-2S]-[ferredoxin] + 2 S-adenosyl-L-methionine = (sulfur carrier)-H + biotin + 2 5'-deoxyadenosine + 2 L-methionine + 2 oxidized [2Fe-2S]-[ferredoxin]</text>
        <dbReference type="Rhea" id="RHEA:22060"/>
        <dbReference type="Rhea" id="RHEA-COMP:10000"/>
        <dbReference type="Rhea" id="RHEA-COMP:10001"/>
        <dbReference type="Rhea" id="RHEA-COMP:14737"/>
        <dbReference type="Rhea" id="RHEA-COMP:14739"/>
        <dbReference type="ChEBI" id="CHEBI:17319"/>
        <dbReference type="ChEBI" id="CHEBI:29917"/>
        <dbReference type="ChEBI" id="CHEBI:33737"/>
        <dbReference type="ChEBI" id="CHEBI:33738"/>
        <dbReference type="ChEBI" id="CHEBI:57586"/>
        <dbReference type="ChEBI" id="CHEBI:57844"/>
        <dbReference type="ChEBI" id="CHEBI:59789"/>
        <dbReference type="ChEBI" id="CHEBI:64428"/>
        <dbReference type="ChEBI" id="CHEBI:149473"/>
        <dbReference type="EC" id="2.8.1.6"/>
    </reaction>
</comment>
<comment type="cofactor">
    <cofactor evidence="1">
        <name>[4Fe-4S] cluster</name>
        <dbReference type="ChEBI" id="CHEBI:49883"/>
    </cofactor>
    <text evidence="1">Binds 1 [4Fe-4S] cluster. The cluster is coordinated with 3 cysteines and an exchangeable S-adenosyl-L-methionine.</text>
</comment>
<comment type="cofactor">
    <cofactor evidence="1">
        <name>[2Fe-2S] cluster</name>
        <dbReference type="ChEBI" id="CHEBI:190135"/>
    </cofactor>
    <text evidence="1">Binds 1 [2Fe-2S] cluster. The cluster is coordinated with 3 cysteines and 1 arginine.</text>
</comment>
<comment type="pathway">
    <text evidence="1">Cofactor biosynthesis; biotin biosynthesis; biotin from 7,8-diaminononanoate: step 2/2.</text>
</comment>
<comment type="subunit">
    <text evidence="1">Homodimer.</text>
</comment>
<comment type="similarity">
    <text evidence="1">Belongs to the radical SAM superfamily. Biotin synthase family.</text>
</comment>
<comment type="sequence caution" evidence="3">
    <conflict type="erroneous initiation">
        <sequence resource="EMBL-CDS" id="ABI61397"/>
    </conflict>
</comment>
<accession>Q0BUV5</accession>
<protein>
    <recommendedName>
        <fullName evidence="1">Biotin synthase</fullName>
        <ecNumber evidence="1">2.8.1.6</ecNumber>
    </recommendedName>
</protein>
<evidence type="ECO:0000255" key="1">
    <source>
        <dbReference type="HAMAP-Rule" id="MF_01694"/>
    </source>
</evidence>
<evidence type="ECO:0000255" key="2">
    <source>
        <dbReference type="PROSITE-ProRule" id="PRU01266"/>
    </source>
</evidence>
<evidence type="ECO:0000305" key="3"/>
<gene>
    <name evidence="1" type="primary">bioB</name>
    <name type="ordered locus">GbCGDNIH1_0499</name>
</gene>
<name>BIOB_GRABC</name>
<reference key="1">
    <citation type="journal article" date="2007" name="J. Bacteriol.">
        <title>Genome sequence analysis of the emerging human pathogenic acetic acid bacterium Granulibacter bethesdensis.</title>
        <authorList>
            <person name="Greenberg D.E."/>
            <person name="Porcella S.F."/>
            <person name="Zelazny A.M."/>
            <person name="Virtaneva K."/>
            <person name="Sturdevant D.E."/>
            <person name="Kupko J.J. III"/>
            <person name="Barbian K.D."/>
            <person name="Babar A."/>
            <person name="Dorward D.W."/>
            <person name="Holland S.M."/>
        </authorList>
    </citation>
    <scope>NUCLEOTIDE SEQUENCE [LARGE SCALE GENOMIC DNA]</scope>
    <source>
        <strain>ATCC BAA-1260 / CGDNIH1</strain>
    </source>
</reference>